<gene>
    <name evidence="1" type="primary">erpA</name>
    <name type="ordered locus">VV2727</name>
</gene>
<evidence type="ECO:0000255" key="1">
    <source>
        <dbReference type="HAMAP-Rule" id="MF_01380"/>
    </source>
</evidence>
<evidence type="ECO:0000305" key="2"/>
<dbReference type="EMBL" id="BA000037">
    <property type="protein sequence ID" value="BAC95491.1"/>
    <property type="status" value="ALT_INIT"/>
    <property type="molecule type" value="Genomic_DNA"/>
</dbReference>
<dbReference type="RefSeq" id="WP_026130638.1">
    <property type="nucleotide sequence ID" value="NC_005139.1"/>
</dbReference>
<dbReference type="SMR" id="Q7MHZ0"/>
<dbReference type="STRING" id="672.VV93_v1c24420"/>
<dbReference type="KEGG" id="vvy:VV2727"/>
<dbReference type="eggNOG" id="COG0316">
    <property type="taxonomic scope" value="Bacteria"/>
</dbReference>
<dbReference type="HOGENOM" id="CLU_069054_5_3_6"/>
<dbReference type="Proteomes" id="UP000002675">
    <property type="component" value="Chromosome I"/>
</dbReference>
<dbReference type="GO" id="GO:0005829">
    <property type="term" value="C:cytosol"/>
    <property type="evidence" value="ECO:0007669"/>
    <property type="project" value="TreeGrafter"/>
</dbReference>
<dbReference type="GO" id="GO:0051537">
    <property type="term" value="F:2 iron, 2 sulfur cluster binding"/>
    <property type="evidence" value="ECO:0007669"/>
    <property type="project" value="TreeGrafter"/>
</dbReference>
<dbReference type="GO" id="GO:0051539">
    <property type="term" value="F:4 iron, 4 sulfur cluster binding"/>
    <property type="evidence" value="ECO:0007669"/>
    <property type="project" value="TreeGrafter"/>
</dbReference>
<dbReference type="GO" id="GO:0005506">
    <property type="term" value="F:iron ion binding"/>
    <property type="evidence" value="ECO:0007669"/>
    <property type="project" value="UniProtKB-UniRule"/>
</dbReference>
<dbReference type="GO" id="GO:0016226">
    <property type="term" value="P:iron-sulfur cluster assembly"/>
    <property type="evidence" value="ECO:0007669"/>
    <property type="project" value="UniProtKB-UniRule"/>
</dbReference>
<dbReference type="FunFam" id="2.60.300.12:FF:000002">
    <property type="entry name" value="Iron-sulfur cluster insertion protein ErpA"/>
    <property type="match status" value="1"/>
</dbReference>
<dbReference type="Gene3D" id="2.60.300.12">
    <property type="entry name" value="HesB-like domain"/>
    <property type="match status" value="1"/>
</dbReference>
<dbReference type="HAMAP" id="MF_01380">
    <property type="entry name" value="Fe_S_insert_ErpA"/>
    <property type="match status" value="1"/>
</dbReference>
<dbReference type="InterPro" id="IPR000361">
    <property type="entry name" value="FeS_biogenesis"/>
</dbReference>
<dbReference type="InterPro" id="IPR016092">
    <property type="entry name" value="FeS_cluster_insertion"/>
</dbReference>
<dbReference type="InterPro" id="IPR017870">
    <property type="entry name" value="FeS_cluster_insertion_CS"/>
</dbReference>
<dbReference type="InterPro" id="IPR023063">
    <property type="entry name" value="FeS_cluster_insertion_RrpA"/>
</dbReference>
<dbReference type="InterPro" id="IPR035903">
    <property type="entry name" value="HesB-like_dom_sf"/>
</dbReference>
<dbReference type="NCBIfam" id="TIGR00049">
    <property type="entry name" value="iron-sulfur cluster assembly accessory protein"/>
    <property type="match status" value="1"/>
</dbReference>
<dbReference type="NCBIfam" id="NF010147">
    <property type="entry name" value="PRK13623.1"/>
    <property type="match status" value="1"/>
</dbReference>
<dbReference type="PANTHER" id="PTHR43011">
    <property type="entry name" value="IRON-SULFUR CLUSTER ASSEMBLY 2 HOMOLOG, MITOCHONDRIAL"/>
    <property type="match status" value="1"/>
</dbReference>
<dbReference type="PANTHER" id="PTHR43011:SF1">
    <property type="entry name" value="IRON-SULFUR CLUSTER ASSEMBLY 2 HOMOLOG, MITOCHONDRIAL"/>
    <property type="match status" value="1"/>
</dbReference>
<dbReference type="Pfam" id="PF01521">
    <property type="entry name" value="Fe-S_biosyn"/>
    <property type="match status" value="1"/>
</dbReference>
<dbReference type="SUPFAM" id="SSF89360">
    <property type="entry name" value="HesB-like domain"/>
    <property type="match status" value="1"/>
</dbReference>
<dbReference type="PROSITE" id="PS01152">
    <property type="entry name" value="HESB"/>
    <property type="match status" value="1"/>
</dbReference>
<proteinExistence type="inferred from homology"/>
<reference key="1">
    <citation type="journal article" date="2003" name="Genome Res.">
        <title>Comparative genome analysis of Vibrio vulnificus, a marine pathogen.</title>
        <authorList>
            <person name="Chen C.-Y."/>
            <person name="Wu K.-M."/>
            <person name="Chang Y.-C."/>
            <person name="Chang C.-H."/>
            <person name="Tsai H.-C."/>
            <person name="Liao T.-L."/>
            <person name="Liu Y.-M."/>
            <person name="Chen H.-J."/>
            <person name="Shen A.B.-T."/>
            <person name="Li J.-C."/>
            <person name="Su T.-L."/>
            <person name="Shao C.-P."/>
            <person name="Lee C.-T."/>
            <person name="Hor L.-I."/>
            <person name="Tsai S.-F."/>
        </authorList>
    </citation>
    <scope>NUCLEOTIDE SEQUENCE [LARGE SCALE GENOMIC DNA]</scope>
    <source>
        <strain>YJ016</strain>
    </source>
</reference>
<name>ERPA_VIBVY</name>
<sequence>MSDINLPLSFSDAAATRVKMLIAEEENPALKLRVYITGGGCSGFQYGFTFDESVNEGDTTIENSGVTLVVDPMSLQYLIGGVVDYTEGLEGSRFFVNNPNATTTCGCGASFSV</sequence>
<accession>Q7MHZ0</accession>
<organism>
    <name type="scientific">Vibrio vulnificus (strain YJ016)</name>
    <dbReference type="NCBI Taxonomy" id="196600"/>
    <lineage>
        <taxon>Bacteria</taxon>
        <taxon>Pseudomonadati</taxon>
        <taxon>Pseudomonadota</taxon>
        <taxon>Gammaproteobacteria</taxon>
        <taxon>Vibrionales</taxon>
        <taxon>Vibrionaceae</taxon>
        <taxon>Vibrio</taxon>
    </lineage>
</organism>
<feature type="chain" id="PRO_0000311573" description="Iron-sulfur cluster insertion protein ErpA">
    <location>
        <begin position="1"/>
        <end position="113"/>
    </location>
</feature>
<feature type="binding site" evidence="1">
    <location>
        <position position="41"/>
    </location>
    <ligand>
        <name>iron-sulfur cluster</name>
        <dbReference type="ChEBI" id="CHEBI:30408"/>
    </ligand>
</feature>
<feature type="binding site" evidence="1">
    <location>
        <position position="105"/>
    </location>
    <ligand>
        <name>iron-sulfur cluster</name>
        <dbReference type="ChEBI" id="CHEBI:30408"/>
    </ligand>
</feature>
<feature type="binding site" evidence="1">
    <location>
        <position position="107"/>
    </location>
    <ligand>
        <name>iron-sulfur cluster</name>
        <dbReference type="ChEBI" id="CHEBI:30408"/>
    </ligand>
</feature>
<protein>
    <recommendedName>
        <fullName evidence="1">Iron-sulfur cluster insertion protein ErpA</fullName>
    </recommendedName>
</protein>
<comment type="function">
    <text evidence="1">Required for insertion of 4Fe-4S clusters for at least IspG.</text>
</comment>
<comment type="cofactor">
    <cofactor evidence="1">
        <name>iron-sulfur cluster</name>
        <dbReference type="ChEBI" id="CHEBI:30408"/>
    </cofactor>
    <text evidence="1">Binds 1 iron-sulfur cluster per subunit.</text>
</comment>
<comment type="subunit">
    <text evidence="1">Homodimer.</text>
</comment>
<comment type="similarity">
    <text evidence="1">Belongs to the HesB/IscA family.</text>
</comment>
<comment type="sequence caution" evidence="2">
    <conflict type="erroneous initiation">
        <sequence resource="EMBL-CDS" id="BAC95491"/>
    </conflict>
</comment>
<keyword id="KW-0408">Iron</keyword>
<keyword id="KW-0411">Iron-sulfur</keyword>
<keyword id="KW-0479">Metal-binding</keyword>